<keyword id="KW-0067">ATP-binding</keyword>
<keyword id="KW-0414">Isoprene biosynthesis</keyword>
<keyword id="KW-0418">Kinase</keyword>
<keyword id="KW-0547">Nucleotide-binding</keyword>
<keyword id="KW-0808">Transferase</keyword>
<protein>
    <recommendedName>
        <fullName evidence="1">4-diphosphocytidyl-2-C-methyl-D-erythritol kinase</fullName>
        <shortName evidence="1">CMK</shortName>
        <ecNumber evidence="1">2.7.1.148</ecNumber>
    </recommendedName>
    <alternativeName>
        <fullName evidence="1">4-(cytidine-5'-diphospho)-2-C-methyl-D-erythritol kinase</fullName>
    </alternativeName>
</protein>
<accession>A9VX42</accession>
<dbReference type="EC" id="2.7.1.148" evidence="1"/>
<dbReference type="EMBL" id="CP000908">
    <property type="protein sequence ID" value="ABY31497.1"/>
    <property type="molecule type" value="Genomic_DNA"/>
</dbReference>
<dbReference type="RefSeq" id="WP_012254418.1">
    <property type="nucleotide sequence ID" value="NC_010172.1"/>
</dbReference>
<dbReference type="SMR" id="A9VX42"/>
<dbReference type="KEGG" id="mex:Mext_3109"/>
<dbReference type="eggNOG" id="COG1947">
    <property type="taxonomic scope" value="Bacteria"/>
</dbReference>
<dbReference type="HOGENOM" id="CLU_053057_1_0_5"/>
<dbReference type="BioCyc" id="MEXT419610:MEXT_RS15625-MONOMER"/>
<dbReference type="UniPathway" id="UPA00056">
    <property type="reaction ID" value="UER00094"/>
</dbReference>
<dbReference type="GO" id="GO:0050515">
    <property type="term" value="F:4-(cytidine 5'-diphospho)-2-C-methyl-D-erythritol kinase activity"/>
    <property type="evidence" value="ECO:0007669"/>
    <property type="project" value="UniProtKB-UniRule"/>
</dbReference>
<dbReference type="GO" id="GO:0005524">
    <property type="term" value="F:ATP binding"/>
    <property type="evidence" value="ECO:0007669"/>
    <property type="project" value="UniProtKB-UniRule"/>
</dbReference>
<dbReference type="GO" id="GO:0019288">
    <property type="term" value="P:isopentenyl diphosphate biosynthetic process, methylerythritol 4-phosphate pathway"/>
    <property type="evidence" value="ECO:0007669"/>
    <property type="project" value="UniProtKB-UniRule"/>
</dbReference>
<dbReference type="GO" id="GO:0016114">
    <property type="term" value="P:terpenoid biosynthetic process"/>
    <property type="evidence" value="ECO:0007669"/>
    <property type="project" value="InterPro"/>
</dbReference>
<dbReference type="Gene3D" id="3.30.230.10">
    <property type="match status" value="1"/>
</dbReference>
<dbReference type="Gene3D" id="3.30.70.890">
    <property type="entry name" value="GHMP kinase, C-terminal domain"/>
    <property type="match status" value="1"/>
</dbReference>
<dbReference type="HAMAP" id="MF_00061">
    <property type="entry name" value="IspE"/>
    <property type="match status" value="1"/>
</dbReference>
<dbReference type="InterPro" id="IPR013750">
    <property type="entry name" value="GHMP_kinase_C_dom"/>
</dbReference>
<dbReference type="InterPro" id="IPR036554">
    <property type="entry name" value="GHMP_kinase_C_sf"/>
</dbReference>
<dbReference type="InterPro" id="IPR006204">
    <property type="entry name" value="GHMP_kinase_N_dom"/>
</dbReference>
<dbReference type="InterPro" id="IPR004424">
    <property type="entry name" value="IspE"/>
</dbReference>
<dbReference type="InterPro" id="IPR020568">
    <property type="entry name" value="Ribosomal_Su5_D2-typ_SF"/>
</dbReference>
<dbReference type="InterPro" id="IPR014721">
    <property type="entry name" value="Ribsml_uS5_D2-typ_fold_subgr"/>
</dbReference>
<dbReference type="NCBIfam" id="NF011202">
    <property type="entry name" value="PRK14608.1"/>
    <property type="match status" value="1"/>
</dbReference>
<dbReference type="PANTHER" id="PTHR43527">
    <property type="entry name" value="4-DIPHOSPHOCYTIDYL-2-C-METHYL-D-ERYTHRITOL KINASE, CHLOROPLASTIC"/>
    <property type="match status" value="1"/>
</dbReference>
<dbReference type="PANTHER" id="PTHR43527:SF2">
    <property type="entry name" value="4-DIPHOSPHOCYTIDYL-2-C-METHYL-D-ERYTHRITOL KINASE, CHLOROPLASTIC"/>
    <property type="match status" value="1"/>
</dbReference>
<dbReference type="Pfam" id="PF08544">
    <property type="entry name" value="GHMP_kinases_C"/>
    <property type="match status" value="1"/>
</dbReference>
<dbReference type="Pfam" id="PF00288">
    <property type="entry name" value="GHMP_kinases_N"/>
    <property type="match status" value="1"/>
</dbReference>
<dbReference type="PIRSF" id="PIRSF010376">
    <property type="entry name" value="IspE"/>
    <property type="match status" value="1"/>
</dbReference>
<dbReference type="SUPFAM" id="SSF55060">
    <property type="entry name" value="GHMP Kinase, C-terminal domain"/>
    <property type="match status" value="1"/>
</dbReference>
<dbReference type="SUPFAM" id="SSF54211">
    <property type="entry name" value="Ribosomal protein S5 domain 2-like"/>
    <property type="match status" value="1"/>
</dbReference>
<evidence type="ECO:0000255" key="1">
    <source>
        <dbReference type="HAMAP-Rule" id="MF_00061"/>
    </source>
</evidence>
<reference key="1">
    <citation type="submission" date="2007-12" db="EMBL/GenBank/DDBJ databases">
        <title>Complete sequence of Methylobacterium extorquens PA1.</title>
        <authorList>
            <consortium name="US DOE Joint Genome Institute"/>
            <person name="Copeland A."/>
            <person name="Lucas S."/>
            <person name="Lapidus A."/>
            <person name="Barry K."/>
            <person name="Glavina del Rio T."/>
            <person name="Dalin E."/>
            <person name="Tice H."/>
            <person name="Pitluck S."/>
            <person name="Saunders E."/>
            <person name="Brettin T."/>
            <person name="Bruce D."/>
            <person name="Detter J.C."/>
            <person name="Han C."/>
            <person name="Schmutz J."/>
            <person name="Larimer F."/>
            <person name="Land M."/>
            <person name="Hauser L."/>
            <person name="Kyrpides N."/>
            <person name="Kim E."/>
            <person name="Marx C."/>
            <person name="Richardson P."/>
        </authorList>
    </citation>
    <scope>NUCLEOTIDE SEQUENCE [LARGE SCALE GENOMIC DNA]</scope>
    <source>
        <strain>PA1</strain>
    </source>
</reference>
<proteinExistence type="inferred from homology"/>
<feature type="chain" id="PRO_1000092095" description="4-diphosphocytidyl-2-C-methyl-D-erythritol kinase">
    <location>
        <begin position="1"/>
        <end position="291"/>
    </location>
</feature>
<feature type="active site" evidence="1">
    <location>
        <position position="11"/>
    </location>
</feature>
<feature type="active site" evidence="1">
    <location>
        <position position="139"/>
    </location>
</feature>
<feature type="binding site" evidence="1">
    <location>
        <begin position="97"/>
        <end position="107"/>
    </location>
    <ligand>
        <name>ATP</name>
        <dbReference type="ChEBI" id="CHEBI:30616"/>
    </ligand>
</feature>
<gene>
    <name evidence="1" type="primary">ispE</name>
    <name type="ordered locus">Mext_3109</name>
</gene>
<organism>
    <name type="scientific">Methylorubrum extorquens (strain PA1)</name>
    <name type="common">Methylobacterium extorquens</name>
    <dbReference type="NCBI Taxonomy" id="419610"/>
    <lineage>
        <taxon>Bacteria</taxon>
        <taxon>Pseudomonadati</taxon>
        <taxon>Pseudomonadota</taxon>
        <taxon>Alphaproteobacteria</taxon>
        <taxon>Hyphomicrobiales</taxon>
        <taxon>Methylobacteriaceae</taxon>
        <taxon>Methylorubrum</taxon>
    </lineage>
</organism>
<name>ISPE_METEP</name>
<comment type="function">
    <text evidence="1">Catalyzes the phosphorylation of the position 2 hydroxy group of 4-diphosphocytidyl-2C-methyl-D-erythritol.</text>
</comment>
<comment type="catalytic activity">
    <reaction evidence="1">
        <text>4-CDP-2-C-methyl-D-erythritol + ATP = 4-CDP-2-C-methyl-D-erythritol 2-phosphate + ADP + H(+)</text>
        <dbReference type="Rhea" id="RHEA:18437"/>
        <dbReference type="ChEBI" id="CHEBI:15378"/>
        <dbReference type="ChEBI" id="CHEBI:30616"/>
        <dbReference type="ChEBI" id="CHEBI:57823"/>
        <dbReference type="ChEBI" id="CHEBI:57919"/>
        <dbReference type="ChEBI" id="CHEBI:456216"/>
        <dbReference type="EC" id="2.7.1.148"/>
    </reaction>
</comment>
<comment type="pathway">
    <text evidence="1">Isoprenoid biosynthesis; isopentenyl diphosphate biosynthesis via DXP pathway; isopentenyl diphosphate from 1-deoxy-D-xylulose 5-phosphate: step 3/6.</text>
</comment>
<comment type="similarity">
    <text evidence="1">Belongs to the GHMP kinase family. IspE subfamily.</text>
</comment>
<sequence length="291" mass="29248">MSVLTTRAPAKINLTLHILGRRPGDGYHALESLVAFADVADTLELVPGPDLTLDISGPTAGPAGPLDDNLVLRAARHLAAGVDGLRLGAFRLHKQLPVAAGIGGGSSDAAAALRLLAELNGLALDYPAVIAAARATGADVPVCLDPRARMMRGAGEEIGPVLGLASLPAVLVNPGVPVSTAPVFKALGLAVGQQLDGAEHPVVGASLDADAVLGVIAPARNDLEAPALTVAPVIGEALGLLWAQAGCRLARMSGSGATVFAIFSDDGAAEMAAGAIRAAQPGWWVEPTRLA</sequence>